<proteinExistence type="inferred from homology"/>
<sequence length="676" mass="77721">MEKNLPDIFFFPNCVNVFSYKYSQDEFSNMSKTERDNFSLAVFPVIKHRWHNAHVVKHKGIYKVSTEARGKKVSPPSLGKPAHINLMSKQYIYSEYAISFECYSFLKCITNTEINSFDEYILRGLLEAGNSLQIFSNSVGKRIDTIGVLGNKYPFSKIPLASLTPKAQREIFLAWISHRPVVLTGGTGVGKTSQVPKLLLWFNYLFGGFSSLDKITDFHERPVILSLPRIALVRLHSNTILKSLGFKVLDGSPISLRYGSIPEELINKQPKKYGIVFSTHKLSLTKLFSYGTIIIDEVHEHDQIGDIIIAVARKHHTKIDSMFLMTATLEDDRERLKIFLPNPAFIHIPGDTLFKISEVFIHNKINPSSRMAYIEEEKRNLVTAIQMYTPPDGSSGIVFVASVAQCHEYKSYLEKRLPYDMYIIHGKVLDIDEILEKVYSSPNVSIIISTPYLESSVTIRNVTHIYDMGRVFVPAPFGGSQQFISKSMRDQRKGRVGRVNPGTYVYFYDLSYMKSIQRIDSEFLHNYILYANKFNLTLPEDLFIIPTNLDILWRTKEYIDSFDISTETWNKLLSNYYMKMIEYAKLYVLSPILAEELDNFERTGELTSIVQEAILSLNLQIKILKFKHKDDDTYIHFCRILFGVYNGTNATIYYHRPLTGYMNMISDTIFVPVDNN</sequence>
<protein>
    <recommendedName>
        <fullName>RNA helicase NPH-II</fullName>
        <ecNumber>3.6.4.13</ecNumber>
    </recommendedName>
    <alternativeName>
        <fullName>Nucleoside triphosphatase II</fullName>
        <shortName>NTPase II</shortName>
    </alternativeName>
    <alternativeName>
        <fullName>Nucleoside triphosphate phosphohydrolase II</fullName>
        <shortName>NPH II</shortName>
    </alternativeName>
</protein>
<dbReference type="EC" id="3.6.4.13"/>
<dbReference type="EMBL" id="MT903340">
    <property type="protein sequence ID" value="QNP12939.1"/>
    <property type="molecule type" value="Genomic_DNA"/>
</dbReference>
<dbReference type="RefSeq" id="YP_010377066.1">
    <property type="nucleotide sequence ID" value="NC_063383.1"/>
</dbReference>
<dbReference type="GeneID" id="72551479"/>
<dbReference type="Proteomes" id="UP000516359">
    <property type="component" value="Genome"/>
</dbReference>
<dbReference type="GO" id="GO:0044423">
    <property type="term" value="C:virion component"/>
    <property type="evidence" value="ECO:0007669"/>
    <property type="project" value="UniProtKB-KW"/>
</dbReference>
<dbReference type="GO" id="GO:0005524">
    <property type="term" value="F:ATP binding"/>
    <property type="evidence" value="ECO:0007669"/>
    <property type="project" value="UniProtKB-KW"/>
</dbReference>
<dbReference type="GO" id="GO:0004386">
    <property type="term" value="F:helicase activity"/>
    <property type="evidence" value="ECO:0007669"/>
    <property type="project" value="UniProtKB-KW"/>
</dbReference>
<dbReference type="GO" id="GO:0017111">
    <property type="term" value="F:ribonucleoside triphosphate phosphatase activity"/>
    <property type="evidence" value="ECO:0007669"/>
    <property type="project" value="InterPro"/>
</dbReference>
<dbReference type="GO" id="GO:0003723">
    <property type="term" value="F:RNA binding"/>
    <property type="evidence" value="ECO:0007669"/>
    <property type="project" value="TreeGrafter"/>
</dbReference>
<dbReference type="Gene3D" id="3.40.50.300">
    <property type="entry name" value="P-loop containing nucleotide triphosphate hydrolases"/>
    <property type="match status" value="2"/>
</dbReference>
<dbReference type="InterPro" id="IPR011545">
    <property type="entry name" value="DEAD/DEAH_box_helicase_dom"/>
</dbReference>
<dbReference type="InterPro" id="IPR002464">
    <property type="entry name" value="DNA/RNA_helicase_DEAH_CS"/>
</dbReference>
<dbReference type="InterPro" id="IPR014001">
    <property type="entry name" value="Helicase_ATP-bd"/>
</dbReference>
<dbReference type="InterPro" id="IPR001650">
    <property type="entry name" value="Helicase_C-like"/>
</dbReference>
<dbReference type="InterPro" id="IPR021892">
    <property type="entry name" value="NPH-II"/>
</dbReference>
<dbReference type="InterPro" id="IPR027417">
    <property type="entry name" value="P-loop_NTPase"/>
</dbReference>
<dbReference type="PANTHER" id="PTHR18934">
    <property type="entry name" value="ATP-DEPENDENT RNA HELICASE"/>
    <property type="match status" value="1"/>
</dbReference>
<dbReference type="PANTHER" id="PTHR18934:SF99">
    <property type="entry name" value="ATP-DEPENDENT RNA HELICASE DHX37-RELATED"/>
    <property type="match status" value="1"/>
</dbReference>
<dbReference type="Pfam" id="PF00270">
    <property type="entry name" value="DEAD"/>
    <property type="match status" value="1"/>
</dbReference>
<dbReference type="Pfam" id="PF00271">
    <property type="entry name" value="Helicase_C"/>
    <property type="match status" value="1"/>
</dbReference>
<dbReference type="Pfam" id="PF12011">
    <property type="entry name" value="NPH-II"/>
    <property type="match status" value="1"/>
</dbReference>
<dbReference type="SMART" id="SM00487">
    <property type="entry name" value="DEXDc"/>
    <property type="match status" value="1"/>
</dbReference>
<dbReference type="SMART" id="SM00490">
    <property type="entry name" value="HELICc"/>
    <property type="match status" value="1"/>
</dbReference>
<dbReference type="SUPFAM" id="SSF52540">
    <property type="entry name" value="P-loop containing nucleoside triphosphate hydrolases"/>
    <property type="match status" value="1"/>
</dbReference>
<dbReference type="PROSITE" id="PS00690">
    <property type="entry name" value="DEAH_ATP_HELICASE"/>
    <property type="match status" value="1"/>
</dbReference>
<dbReference type="PROSITE" id="PS51192">
    <property type="entry name" value="HELICASE_ATP_BIND_1"/>
    <property type="match status" value="1"/>
</dbReference>
<dbReference type="PROSITE" id="PS51194">
    <property type="entry name" value="HELICASE_CTER"/>
    <property type="match status" value="1"/>
</dbReference>
<accession>A0A7H0DN56</accession>
<feature type="chain" id="PRO_0000457688" description="RNA helicase NPH-II">
    <location>
        <begin position="1"/>
        <end position="676"/>
    </location>
</feature>
<feature type="domain" description="Helicase ATP-binding" evidence="2">
    <location>
        <begin position="172"/>
        <end position="347"/>
    </location>
</feature>
<feature type="domain" description="Helicase C-terminal" evidence="3">
    <location>
        <begin position="366"/>
        <end position="535"/>
    </location>
</feature>
<feature type="short sequence motif" description="DEXH box" evidence="1">
    <location>
        <begin position="296"/>
        <end position="299"/>
    </location>
</feature>
<feature type="binding site" evidence="2">
    <location>
        <begin position="185"/>
        <end position="192"/>
    </location>
    <ligand>
        <name>ATP</name>
        <dbReference type="ChEBI" id="CHEBI:30616"/>
    </ligand>
</feature>
<name>NPH2_MONPV</name>
<keyword id="KW-0067">ATP-binding</keyword>
<keyword id="KW-0347">Helicase</keyword>
<keyword id="KW-0378">Hydrolase</keyword>
<keyword id="KW-0547">Nucleotide-binding</keyword>
<keyword id="KW-1185">Reference proteome</keyword>
<keyword id="KW-0804">Transcription</keyword>
<keyword id="KW-0946">Virion</keyword>
<reference key="1">
    <citation type="journal article" date="2022" name="J. Infect. Dis.">
        <title>Exportation of Monkeypox virus from the African continent.</title>
        <authorList>
            <person name="Mauldin M.R."/>
            <person name="McCollum A.M."/>
            <person name="Nakazawa Y.J."/>
            <person name="Mandra A."/>
            <person name="Whitehouse E.R."/>
            <person name="Davidson W."/>
            <person name="Zhao H."/>
            <person name="Gao J."/>
            <person name="Li Y."/>
            <person name="Doty J."/>
            <person name="Yinka-Ogunleye A."/>
            <person name="Akinpelu A."/>
            <person name="Aruna O."/>
            <person name="Naidoo D."/>
            <person name="Lewandowski K."/>
            <person name="Afrough B."/>
            <person name="Graham V."/>
            <person name="Aarons E."/>
            <person name="Hewson R."/>
            <person name="Vipond R."/>
            <person name="Dunning J."/>
            <person name="Chand M."/>
            <person name="Brown C."/>
            <person name="Cohen-Gihon I."/>
            <person name="Erez N."/>
            <person name="Shifman O."/>
            <person name="Israeli O."/>
            <person name="Sharon M."/>
            <person name="Schwartz E."/>
            <person name="Beth-Din A."/>
            <person name="Zvi A."/>
            <person name="Mak T.M."/>
            <person name="Ng Y.K."/>
            <person name="Cui L."/>
            <person name="Lin R.T.P."/>
            <person name="Olson V.A."/>
            <person name="Brooks T."/>
            <person name="Paran N."/>
            <person name="Ihekweazu C."/>
            <person name="Reynolds M.G."/>
        </authorList>
    </citation>
    <scope>NUCLEOTIDE SEQUENCE [LARGE SCALE GENOMIC DNA]</scope>
    <source>
        <strain>MPXV-M5312_HM12_Rivers</strain>
    </source>
</reference>
<comment type="function">
    <text evidence="1">NTP-dependent helicase that catalyzes unidirectional unwinding of 3'tailed duplex RNAs and plays an important role during transcription of early mRNAs, presumably by preventing R-loop formation behind the elongating RNA polymerase. Might also play a role in the export of newly synthesized mRNA chains out of the core into the cytoplasm. Required for replication and propagation of viral particles.</text>
</comment>
<comment type="catalytic activity">
    <reaction evidence="1">
        <text>ATP + H2O = ADP + phosphate + H(+)</text>
        <dbReference type="Rhea" id="RHEA:13065"/>
        <dbReference type="ChEBI" id="CHEBI:15377"/>
        <dbReference type="ChEBI" id="CHEBI:15378"/>
        <dbReference type="ChEBI" id="CHEBI:30616"/>
        <dbReference type="ChEBI" id="CHEBI:43474"/>
        <dbReference type="ChEBI" id="CHEBI:456216"/>
        <dbReference type="EC" id="3.6.4.13"/>
    </reaction>
</comment>
<comment type="subunit">
    <text evidence="1">Monomer.</text>
</comment>
<comment type="subcellular location">
    <subcellularLocation>
        <location evidence="1">Virion</location>
    </subcellularLocation>
    <text evidence="1">Localizes to the virion core.</text>
</comment>
<comment type="similarity">
    <text evidence="4">Belongs to the DEAD box helicase family. DEAH subfamily.</text>
</comment>
<organism>
    <name type="scientific">Monkeypox virus</name>
    <dbReference type="NCBI Taxonomy" id="10244"/>
    <lineage>
        <taxon>Viruses</taxon>
        <taxon>Varidnaviria</taxon>
        <taxon>Bamfordvirae</taxon>
        <taxon>Nucleocytoviricota</taxon>
        <taxon>Pokkesviricetes</taxon>
        <taxon>Chitovirales</taxon>
        <taxon>Poxviridae</taxon>
        <taxon>Chordopoxvirinae</taxon>
        <taxon>Orthopoxvirus</taxon>
    </lineage>
</organism>
<evidence type="ECO:0000250" key="1">
    <source>
        <dbReference type="UniProtKB" id="P12927"/>
    </source>
</evidence>
<evidence type="ECO:0000255" key="2">
    <source>
        <dbReference type="PROSITE-ProRule" id="PRU00541"/>
    </source>
</evidence>
<evidence type="ECO:0000255" key="3">
    <source>
        <dbReference type="PROSITE-ProRule" id="PRU00542"/>
    </source>
</evidence>
<evidence type="ECO:0000305" key="4"/>
<gene>
    <name type="primary">OPG084</name>
    <name type="synonym">NPH2</name>
    <name type="ORF">MPXVgp069</name>
</gene>
<organismHost>
    <name type="scientific">Cynomys gunnisoni</name>
    <name type="common">Gunnison's prairie dog</name>
    <name type="synonym">Spermophilus gunnisoni</name>
    <dbReference type="NCBI Taxonomy" id="45479"/>
</organismHost>
<organismHost>
    <name type="scientific">Cynomys leucurus</name>
    <name type="common">White-tailed prairie dog</name>
    <dbReference type="NCBI Taxonomy" id="99825"/>
</organismHost>
<organismHost>
    <name type="scientific">Cynomys ludovicianus</name>
    <name type="common">Black-tailed prairie dog</name>
    <dbReference type="NCBI Taxonomy" id="45480"/>
</organismHost>
<organismHost>
    <name type="scientific">Cynomys mexicanus</name>
    <name type="common">Mexican prairie dog</name>
    <dbReference type="NCBI Taxonomy" id="99826"/>
</organismHost>
<organismHost>
    <name type="scientific">Cynomys parvidens</name>
    <name type="common">Utah prairie dog</name>
    <dbReference type="NCBI Taxonomy" id="99827"/>
</organismHost>
<organismHost>
    <name type="scientific">Gliridae</name>
    <name type="common">dormice</name>
    <dbReference type="NCBI Taxonomy" id="30650"/>
</organismHost>
<organismHost>
    <name type="scientific">Heliosciurus ruwenzorii</name>
    <name type="common">Ruwenzori sun squirrel</name>
    <dbReference type="NCBI Taxonomy" id="226685"/>
</organismHost>
<organismHost>
    <name type="scientific">Homo sapiens</name>
    <name type="common">Human</name>
    <dbReference type="NCBI Taxonomy" id="9606"/>
</organismHost>
<organismHost>
    <name type="scientific">Mus musculus</name>
    <name type="common">Mouse</name>
    <dbReference type="NCBI Taxonomy" id="10090"/>
</organismHost>